<feature type="chain" id="PRO_0000453078" description="Asnovolin H dehydrogenase nvfC">
    <location>
        <begin position="1"/>
        <end position="257"/>
    </location>
</feature>
<feature type="transmembrane region" description="Helical" evidence="3">
    <location>
        <begin position="7"/>
        <end position="26"/>
    </location>
</feature>
<feature type="active site" description="Proton donor" evidence="2">
    <location>
        <position position="151"/>
    </location>
</feature>
<feature type="active site" description="Lowers pKa of active site Tyr" evidence="2">
    <location>
        <position position="155"/>
    </location>
</feature>
<feature type="binding site" evidence="1">
    <location>
        <position position="11"/>
    </location>
    <ligand>
        <name>NADP(+)</name>
        <dbReference type="ChEBI" id="CHEBI:58349"/>
    </ligand>
</feature>
<feature type="binding site" evidence="1">
    <location>
        <position position="119"/>
    </location>
    <ligand>
        <name>NADP(+)</name>
        <dbReference type="ChEBI" id="CHEBI:58349"/>
    </ligand>
</feature>
<feature type="binding site" evidence="2">
    <location>
        <position position="151"/>
    </location>
    <ligand>
        <name>NADP(+)</name>
        <dbReference type="ChEBI" id="CHEBI:58349"/>
    </ligand>
</feature>
<feature type="binding site" evidence="2">
    <location>
        <position position="155"/>
    </location>
    <ligand>
        <name>NADP(+)</name>
        <dbReference type="ChEBI" id="CHEBI:58349"/>
    </ligand>
</feature>
<feature type="binding site" evidence="2">
    <location>
        <position position="184"/>
    </location>
    <ligand>
        <name>NADP(+)</name>
        <dbReference type="ChEBI" id="CHEBI:58349"/>
    </ligand>
</feature>
<feature type="glycosylation site" description="N-linked (GlcNAc...) asparagine" evidence="4">
    <location>
        <position position="57"/>
    </location>
</feature>
<feature type="glycosylation site" description="N-linked (GlcNAc...) asparagine" evidence="4">
    <location>
        <position position="92"/>
    </location>
</feature>
<feature type="glycosylation site" description="N-linked (GlcNAc...) asparagine" evidence="4">
    <location>
        <position position="110"/>
    </location>
</feature>
<proteinExistence type="evidence at protein level"/>
<evidence type="ECO:0000250" key="1">
    <source>
        <dbReference type="UniProtKB" id="L0E2Z4"/>
    </source>
</evidence>
<evidence type="ECO:0000250" key="2">
    <source>
        <dbReference type="UniProtKB" id="O93868"/>
    </source>
</evidence>
<evidence type="ECO:0000255" key="3"/>
<evidence type="ECO:0000255" key="4">
    <source>
        <dbReference type="PROSITE-ProRule" id="PRU00498"/>
    </source>
</evidence>
<evidence type="ECO:0000269" key="5">
    <source>
    </source>
</evidence>
<evidence type="ECO:0000303" key="6">
    <source>
    </source>
</evidence>
<evidence type="ECO:0000305" key="7"/>
<accession>A0A2I1BSW8</accession>
<comment type="function">
    <text evidence="5">Short chain dehydrogenase; part of the gene cluster that mediates the biosynthesis of novofumigatonin, a heavily oxygenated meroterpenoid containing a unique orthoester moiety (PubMed:29968715). The first step of the pathway is the synthesis of 3,5-dimethylorsellinic acid (DMOA) by the polyketide synthase nvfA via condensation of one acetyl-CoA starter unit with 3 malonyl-CoA units and 2 methylations (PubMed:29968715). DMOA is then converted to farnesyl-DMOA by the farnesyltransferase nvfB (PubMed:29968715). Epoxydation by FAD-dependent monooxygenase nvfK, followed by a protonation-initiated cyclization catalyzed by the terpene cyclase nvfL leads to the production of asnavolin H (PubMed:29968715). The short chain dehydrogenase nvfC then as a 3-OH dehydrogenase of asnovolin H to yield chemesin D (PubMed:29968715). There are two branches to synthesize asnovolin A from chemesin D (PubMed:29968715). In one branch, chemesin D undergoes Baeyer-Villiger oxidation by nvfH, methylation by nvfJ, and enoyl reduction by the nvfM D enoylreductase that reduces the double bond between C-5'and C-6', to form respectively asnovolin I, asnovolin K, and asnovolin A (PubMed:29968715). In the other branch, the methylation precedes the Baeyer-Villiger oxidation and the enoyl reduction to yield asnovolin A via the asnovolin J intermediate (PubMed:29968715). Asnovolin A is further converted to fumigatonoid A by the Fe(II)/2-oxoglutarate-dependent dioxygenase nvfI that catalyzes an endoperoxidation reaction (PubMed:29968715). The alpha/beta hydrolase nvfD then acts as an epimerase that converts fumigatonoid A to its C-5' epimer, which then undergoes spontaneous or nvfD-catalyzed lactonization (PubMed:29968715). The following step utilizes the ketoreductase nvfG to produce fumigatonoid B (PubMed:29968715). The dioxygenase nvfE further converts fumigatonoid B into fumigatonoid C (PubMed:29968715). Finally the Fe(II)/2-oxoglutarate-dependent dioxygenase nvfF catalyzes two rounds of oxidation to transform fumigatonoid C into the end product, novofumigatonin A (PubMed:29968715).</text>
</comment>
<comment type="catalytic activity">
    <reaction evidence="5">
        <text>asnovolin H + A = chermesin D + AH2</text>
        <dbReference type="Rhea" id="RHEA:67044"/>
        <dbReference type="ChEBI" id="CHEBI:13193"/>
        <dbReference type="ChEBI" id="CHEBI:17499"/>
        <dbReference type="ChEBI" id="CHEBI:156464"/>
        <dbReference type="ChEBI" id="CHEBI:156465"/>
    </reaction>
    <physiologicalReaction direction="left-to-right" evidence="5">
        <dbReference type="Rhea" id="RHEA:67045"/>
    </physiologicalReaction>
</comment>
<comment type="pathway">
    <text evidence="5">Secondary metabolite biosynthesis; terpenoid biosynthesis.</text>
</comment>
<comment type="subcellular location">
    <subcellularLocation>
        <location evidence="3">Membrane</location>
        <topology evidence="3">Single-pass membrane protein</topology>
    </subcellularLocation>
</comment>
<comment type="disruption phenotype">
    <text evidence="5">Completely abolishes the production of novofumigatonin as well as asnovolin A.</text>
</comment>
<comment type="similarity">
    <text evidence="7">Belongs to the short-chain dehydrogenases/reductases (SDR) family.</text>
</comment>
<keyword id="KW-0325">Glycoprotein</keyword>
<keyword id="KW-0472">Membrane</keyword>
<keyword id="KW-0521">NADP</keyword>
<keyword id="KW-0560">Oxidoreductase</keyword>
<keyword id="KW-1185">Reference proteome</keyword>
<keyword id="KW-0812">Transmembrane</keyword>
<keyword id="KW-1133">Transmembrane helix</keyword>
<dbReference type="EC" id="1.1.99.-" evidence="5"/>
<dbReference type="EMBL" id="MSZS01000014">
    <property type="protein sequence ID" value="PKX88485.1"/>
    <property type="molecule type" value="Genomic_DNA"/>
</dbReference>
<dbReference type="SMR" id="A0A2I1BSW8"/>
<dbReference type="STRING" id="1392255.A0A2I1BSW8"/>
<dbReference type="GlyCosmos" id="A0A2I1BSW8">
    <property type="glycosylation" value="3 sites, No reported glycans"/>
</dbReference>
<dbReference type="VEuPathDB" id="FungiDB:P174DRAFT_465152"/>
<dbReference type="OMA" id="IPIDNAW"/>
<dbReference type="OrthoDB" id="37659at2759"/>
<dbReference type="UniPathway" id="UPA00213"/>
<dbReference type="Proteomes" id="UP000234474">
    <property type="component" value="Unassembled WGS sequence"/>
</dbReference>
<dbReference type="GO" id="GO:0016020">
    <property type="term" value="C:membrane"/>
    <property type="evidence" value="ECO:0007669"/>
    <property type="project" value="UniProtKB-SubCell"/>
</dbReference>
<dbReference type="GO" id="GO:0016491">
    <property type="term" value="F:oxidoreductase activity"/>
    <property type="evidence" value="ECO:0000314"/>
    <property type="project" value="UniProt"/>
</dbReference>
<dbReference type="GO" id="GO:0140782">
    <property type="term" value="P:novofumigatonin biosynthetic process"/>
    <property type="evidence" value="ECO:0000314"/>
    <property type="project" value="GO_Central"/>
</dbReference>
<dbReference type="CDD" id="cd05233">
    <property type="entry name" value="SDR_c"/>
    <property type="match status" value="1"/>
</dbReference>
<dbReference type="FunFam" id="3.40.50.720:FF:000084">
    <property type="entry name" value="Short-chain dehydrogenase reductase"/>
    <property type="match status" value="1"/>
</dbReference>
<dbReference type="Gene3D" id="3.40.50.720">
    <property type="entry name" value="NAD(P)-binding Rossmann-like Domain"/>
    <property type="match status" value="1"/>
</dbReference>
<dbReference type="InterPro" id="IPR036291">
    <property type="entry name" value="NAD(P)-bd_dom_sf"/>
</dbReference>
<dbReference type="InterPro" id="IPR002347">
    <property type="entry name" value="SDR_fam"/>
</dbReference>
<dbReference type="InterPro" id="IPR051122">
    <property type="entry name" value="SDR_superfamily_enzyme"/>
</dbReference>
<dbReference type="PANTHER" id="PTHR43477">
    <property type="entry name" value="DIHYDROANTICAPSIN 7-DEHYDROGENASE"/>
    <property type="match status" value="1"/>
</dbReference>
<dbReference type="PANTHER" id="PTHR43477:SF1">
    <property type="entry name" value="DIHYDROANTICAPSIN 7-DEHYDROGENASE"/>
    <property type="match status" value="1"/>
</dbReference>
<dbReference type="Pfam" id="PF00106">
    <property type="entry name" value="adh_short"/>
    <property type="match status" value="1"/>
</dbReference>
<dbReference type="PRINTS" id="PR00081">
    <property type="entry name" value="GDHRDH"/>
</dbReference>
<dbReference type="PRINTS" id="PR00080">
    <property type="entry name" value="SDRFAMILY"/>
</dbReference>
<dbReference type="SUPFAM" id="SSF51735">
    <property type="entry name" value="NAD(P)-binding Rossmann-fold domains"/>
    <property type="match status" value="1"/>
</dbReference>
<organism>
    <name type="scientific">Aspergillus novofumigatus (strain IBT 16806)</name>
    <dbReference type="NCBI Taxonomy" id="1392255"/>
    <lineage>
        <taxon>Eukaryota</taxon>
        <taxon>Fungi</taxon>
        <taxon>Dikarya</taxon>
        <taxon>Ascomycota</taxon>
        <taxon>Pezizomycotina</taxon>
        <taxon>Eurotiomycetes</taxon>
        <taxon>Eurotiomycetidae</taxon>
        <taxon>Eurotiales</taxon>
        <taxon>Aspergillaceae</taxon>
        <taxon>Aspergillus</taxon>
        <taxon>Aspergillus subgen. Fumigati</taxon>
    </lineage>
</organism>
<reference key="1">
    <citation type="journal article" date="2018" name="Proc. Natl. Acad. Sci. U.S.A.">
        <title>Linking secondary metabolites to gene clusters through genome sequencing of six diverse Aspergillus species.</title>
        <authorList>
            <person name="Kjaerboelling I."/>
            <person name="Vesth T.C."/>
            <person name="Frisvad J.C."/>
            <person name="Nybo J.L."/>
            <person name="Theobald S."/>
            <person name="Kuo A."/>
            <person name="Bowyer P."/>
            <person name="Matsuda Y."/>
            <person name="Mondo S."/>
            <person name="Lyhne E.K."/>
            <person name="Kogle M.E."/>
            <person name="Clum A."/>
            <person name="Lipzen A."/>
            <person name="Salamov A."/>
            <person name="Ngan C.Y."/>
            <person name="Daum C."/>
            <person name="Chiniquy J."/>
            <person name="Barry K."/>
            <person name="LaButti K."/>
            <person name="Haridas S."/>
            <person name="Simmons B.A."/>
            <person name="Magnuson J.K."/>
            <person name="Mortensen U.H."/>
            <person name="Larsen T.O."/>
            <person name="Grigoriev I.V."/>
            <person name="Baker S.E."/>
            <person name="Andersen M.R."/>
        </authorList>
    </citation>
    <scope>NUCLEOTIDE SEQUENCE [LARGE SCALE GENOMIC DNA]</scope>
    <source>
        <strain>IBT 16806</strain>
    </source>
</reference>
<reference key="2">
    <citation type="journal article" date="2018" name="Nat. Commun.">
        <title>Novofumigatonin biosynthesis involves a non-heme iron-dependent endoperoxide isomerase for orthoester formation.</title>
        <authorList>
            <person name="Matsuda Y."/>
            <person name="Bai T."/>
            <person name="Phippen C.B.W."/>
            <person name="Noedvig C.S."/>
            <person name="Kjaerboelling I."/>
            <person name="Vesth T.C."/>
            <person name="Andersen M.R."/>
            <person name="Mortensen U.H."/>
            <person name="Gotfredsen C.H."/>
            <person name="Abe I."/>
            <person name="Larsen T.O."/>
        </authorList>
    </citation>
    <scope>FUNCTION</scope>
    <scope>DISRUPTION PHENOTYPE</scope>
    <scope>CATALYTIC ACTIVITY</scope>
    <scope>PATHWAY</scope>
</reference>
<name>NVFC_ASPN1</name>
<gene>
    <name evidence="6" type="primary">nvfC</name>
    <name type="ORF">P174DRAFT_465152</name>
</gene>
<protein>
    <recommendedName>
        <fullName evidence="6">Asnovolin H dehydrogenase nvfC</fullName>
        <ecNumber evidence="5">1.1.99.-</ecNumber>
    </recommendedName>
    <alternativeName>
        <fullName evidence="6">Novofumigatonin biosynthesis cluster protein C</fullName>
    </alternativeName>
    <alternativeName>
        <fullName evidence="6">Short chain dehydrogenase nvfC</fullName>
    </alternativeName>
</protein>
<sequence length="257" mass="27344">MGSLHDYVLIITGSASGIGLATATIALDEGARVLGVDISSPPRSLIDHSNFKFVEGNLSLEPTPRRVVEACVKAFGGRIDGLLNIAGVMDLNQSVDSLSDTMWESCIAINLTAPVKLMREVIPIMRQQKSGSIVNVASKAALSGAVSGVAYTASKHGLVGATKNVAWRFKQENIRCNAVCPGAVDGTSIHRGLETSQFDSEALGTMSLIHEAHMRDRERGIHIQPEDIARSLLFLVSSRSNGINGAIIPIDNAWSTI</sequence>